<feature type="chain" id="PRO_0000142960" description="Porphobilinogen deaminase">
    <location>
        <begin position="1"/>
        <end position="309"/>
    </location>
</feature>
<feature type="modified residue" description="S-(dipyrrolylmethanemethyl)cysteine" evidence="1">
    <location>
        <position position="234"/>
    </location>
</feature>
<comment type="function">
    <text evidence="1">Tetrapolymerization of the monopyrrole PBG into the hydroxymethylbilane pre-uroporphyrinogen in several discrete steps.</text>
</comment>
<comment type="catalytic activity">
    <reaction>
        <text>4 porphobilinogen + H2O = hydroxymethylbilane + 4 NH4(+)</text>
        <dbReference type="Rhea" id="RHEA:13185"/>
        <dbReference type="ChEBI" id="CHEBI:15377"/>
        <dbReference type="ChEBI" id="CHEBI:28938"/>
        <dbReference type="ChEBI" id="CHEBI:57845"/>
        <dbReference type="ChEBI" id="CHEBI:58126"/>
        <dbReference type="EC" id="2.5.1.61"/>
    </reaction>
</comment>
<comment type="cofactor">
    <cofactor evidence="1">
        <name>dipyrromethane</name>
        <dbReference type="ChEBI" id="CHEBI:60342"/>
    </cofactor>
    <text evidence="1">Binds 1 dipyrromethane group covalently.</text>
</comment>
<comment type="pathway">
    <text>Porphyrin-containing compound metabolism; protoporphyrin-IX biosynthesis; coproporphyrinogen-III from 5-aminolevulinate: step 2/4.</text>
</comment>
<comment type="subunit">
    <text evidence="1">Monomer.</text>
</comment>
<comment type="miscellaneous">
    <text evidence="1">The porphobilinogen subunits are added to the dipyrromethane group.</text>
</comment>
<comment type="similarity">
    <text evidence="2">Belongs to the HMBS family.</text>
</comment>
<proteinExistence type="evidence at protein level"/>
<organism>
    <name type="scientific">Mycobacterium tuberculosis (strain ATCC 25618 / H37Rv)</name>
    <dbReference type="NCBI Taxonomy" id="83332"/>
    <lineage>
        <taxon>Bacteria</taxon>
        <taxon>Bacillati</taxon>
        <taxon>Actinomycetota</taxon>
        <taxon>Actinomycetes</taxon>
        <taxon>Mycobacteriales</taxon>
        <taxon>Mycobacteriaceae</taxon>
        <taxon>Mycobacterium</taxon>
        <taxon>Mycobacterium tuberculosis complex</taxon>
    </lineage>
</organism>
<gene>
    <name type="primary">hemC</name>
    <name type="ordered locus">Rv0510</name>
    <name type="ORF">MTCY20G9.37</name>
</gene>
<evidence type="ECO:0000250" key="1"/>
<evidence type="ECO:0000305" key="2"/>
<dbReference type="EC" id="2.5.1.61"/>
<dbReference type="EMBL" id="AL123456">
    <property type="protein sequence ID" value="CCP43247.1"/>
    <property type="molecule type" value="Genomic_DNA"/>
</dbReference>
<dbReference type="PIR" id="A70747">
    <property type="entry name" value="A70747"/>
</dbReference>
<dbReference type="RefSeq" id="NP_215024.1">
    <property type="nucleotide sequence ID" value="NC_000962.3"/>
</dbReference>
<dbReference type="RefSeq" id="WP_003402702.1">
    <property type="nucleotide sequence ID" value="NZ_NVQJ01000002.1"/>
</dbReference>
<dbReference type="SMR" id="P9WMP3"/>
<dbReference type="FunCoup" id="P9WMP3">
    <property type="interactions" value="537"/>
</dbReference>
<dbReference type="STRING" id="83332.Rv0510"/>
<dbReference type="PaxDb" id="83332-Rv0510"/>
<dbReference type="DNASU" id="887306"/>
<dbReference type="GeneID" id="887306"/>
<dbReference type="KEGG" id="mtu:Rv0510"/>
<dbReference type="KEGG" id="mtv:RVBD_0510"/>
<dbReference type="TubercuList" id="Rv0510"/>
<dbReference type="eggNOG" id="COG0181">
    <property type="taxonomic scope" value="Bacteria"/>
</dbReference>
<dbReference type="InParanoid" id="P9WMP3"/>
<dbReference type="OrthoDB" id="9810298at2"/>
<dbReference type="PhylomeDB" id="P9WMP3"/>
<dbReference type="UniPathway" id="UPA00251">
    <property type="reaction ID" value="UER00319"/>
</dbReference>
<dbReference type="Proteomes" id="UP000001584">
    <property type="component" value="Chromosome"/>
</dbReference>
<dbReference type="GO" id="GO:0005737">
    <property type="term" value="C:cytoplasm"/>
    <property type="evidence" value="ECO:0000318"/>
    <property type="project" value="GO_Central"/>
</dbReference>
<dbReference type="GO" id="GO:0005886">
    <property type="term" value="C:plasma membrane"/>
    <property type="evidence" value="ECO:0007005"/>
    <property type="project" value="MTBBASE"/>
</dbReference>
<dbReference type="GO" id="GO:0004418">
    <property type="term" value="F:hydroxymethylbilane synthase activity"/>
    <property type="evidence" value="ECO:0000318"/>
    <property type="project" value="GO_Central"/>
</dbReference>
<dbReference type="GO" id="GO:0006783">
    <property type="term" value="P:heme biosynthetic process"/>
    <property type="evidence" value="ECO:0000318"/>
    <property type="project" value="GO_Central"/>
</dbReference>
<dbReference type="GO" id="GO:0006782">
    <property type="term" value="P:protoporphyrinogen IX biosynthetic process"/>
    <property type="evidence" value="ECO:0007669"/>
    <property type="project" value="UniProtKB-UniRule"/>
</dbReference>
<dbReference type="CDD" id="cd13646">
    <property type="entry name" value="PBP2_EcHMBS_like"/>
    <property type="match status" value="1"/>
</dbReference>
<dbReference type="FunFam" id="3.30.160.40:FF:000001">
    <property type="entry name" value="Porphobilinogen deaminase"/>
    <property type="match status" value="1"/>
</dbReference>
<dbReference type="FunFam" id="3.40.190.10:FF:000005">
    <property type="entry name" value="Porphobilinogen deaminase"/>
    <property type="match status" value="1"/>
</dbReference>
<dbReference type="Gene3D" id="3.40.190.10">
    <property type="entry name" value="Periplasmic binding protein-like II"/>
    <property type="match status" value="2"/>
</dbReference>
<dbReference type="Gene3D" id="3.30.160.40">
    <property type="entry name" value="Porphobilinogen deaminase, C-terminal domain"/>
    <property type="match status" value="1"/>
</dbReference>
<dbReference type="HAMAP" id="MF_00260">
    <property type="entry name" value="Porphobil_deam"/>
    <property type="match status" value="1"/>
</dbReference>
<dbReference type="InterPro" id="IPR000860">
    <property type="entry name" value="HemC"/>
</dbReference>
<dbReference type="InterPro" id="IPR022419">
    <property type="entry name" value="Porphobilin_deaminase_cofac_BS"/>
</dbReference>
<dbReference type="InterPro" id="IPR022417">
    <property type="entry name" value="Porphobilin_deaminase_N"/>
</dbReference>
<dbReference type="InterPro" id="IPR022418">
    <property type="entry name" value="Porphobilinogen_deaminase_C"/>
</dbReference>
<dbReference type="InterPro" id="IPR036803">
    <property type="entry name" value="Porphobilinogen_deaminase_C_sf"/>
</dbReference>
<dbReference type="NCBIfam" id="TIGR00212">
    <property type="entry name" value="hemC"/>
    <property type="match status" value="1"/>
</dbReference>
<dbReference type="PANTHER" id="PTHR11557">
    <property type="entry name" value="PORPHOBILINOGEN DEAMINASE"/>
    <property type="match status" value="1"/>
</dbReference>
<dbReference type="PANTHER" id="PTHR11557:SF0">
    <property type="entry name" value="PORPHOBILINOGEN DEAMINASE"/>
    <property type="match status" value="1"/>
</dbReference>
<dbReference type="Pfam" id="PF01379">
    <property type="entry name" value="Porphobil_deam"/>
    <property type="match status" value="1"/>
</dbReference>
<dbReference type="Pfam" id="PF03900">
    <property type="entry name" value="Porphobil_deamC"/>
    <property type="match status" value="1"/>
</dbReference>
<dbReference type="PIRSF" id="PIRSF001438">
    <property type="entry name" value="4pyrrol_synth_OHMeBilane_synth"/>
    <property type="match status" value="1"/>
</dbReference>
<dbReference type="PRINTS" id="PR00151">
    <property type="entry name" value="PORPHBDMNASE"/>
</dbReference>
<dbReference type="SUPFAM" id="SSF53850">
    <property type="entry name" value="Periplasmic binding protein-like II"/>
    <property type="match status" value="1"/>
</dbReference>
<dbReference type="SUPFAM" id="SSF54782">
    <property type="entry name" value="Porphobilinogen deaminase (hydroxymethylbilane synthase), C-terminal domain"/>
    <property type="match status" value="1"/>
</dbReference>
<dbReference type="PROSITE" id="PS00533">
    <property type="entry name" value="PORPHOBILINOGEN_DEAM"/>
    <property type="match status" value="1"/>
</dbReference>
<sequence length="309" mass="31938">MIRIGTRGSLLATTQAATVRDALIAGGHSAELVTISTEGDRSMAPIASLGVGVFTTALREAMEAGLVDAAVHSYKDLPTAADPRFTVAAIPPRNDPRDAVVARDGLTLGELPVGSLVGTSSPRRAAQLRALGLGLEIRPLRGNLDTRLNKVSSGDLDAIVVARAGLARLGRLDDVTETLEPVQMLPAPAQGALAVECRAGDSRLVAVLAELDDADTRAAVTAERALLADLEAGCSAPVGAIAEVVESIDEDGRVFEELSLRGCVAALDGSDVIRASGIGSCGRARELGLSVAAELFELGARELMWGVRH</sequence>
<accession>P9WMP3</accession>
<accession>L0T6W8</accession>
<accession>P64336</accession>
<accession>Q11173</accession>
<reference key="1">
    <citation type="journal article" date="1998" name="Nature">
        <title>Deciphering the biology of Mycobacterium tuberculosis from the complete genome sequence.</title>
        <authorList>
            <person name="Cole S.T."/>
            <person name="Brosch R."/>
            <person name="Parkhill J."/>
            <person name="Garnier T."/>
            <person name="Churcher C.M."/>
            <person name="Harris D.E."/>
            <person name="Gordon S.V."/>
            <person name="Eiglmeier K."/>
            <person name="Gas S."/>
            <person name="Barry C.E. III"/>
            <person name="Tekaia F."/>
            <person name="Badcock K."/>
            <person name="Basham D."/>
            <person name="Brown D."/>
            <person name="Chillingworth T."/>
            <person name="Connor R."/>
            <person name="Davies R.M."/>
            <person name="Devlin K."/>
            <person name="Feltwell T."/>
            <person name="Gentles S."/>
            <person name="Hamlin N."/>
            <person name="Holroyd S."/>
            <person name="Hornsby T."/>
            <person name="Jagels K."/>
            <person name="Krogh A."/>
            <person name="McLean J."/>
            <person name="Moule S."/>
            <person name="Murphy L.D."/>
            <person name="Oliver S."/>
            <person name="Osborne J."/>
            <person name="Quail M.A."/>
            <person name="Rajandream M.A."/>
            <person name="Rogers J."/>
            <person name="Rutter S."/>
            <person name="Seeger K."/>
            <person name="Skelton S."/>
            <person name="Squares S."/>
            <person name="Squares R."/>
            <person name="Sulston J.E."/>
            <person name="Taylor K."/>
            <person name="Whitehead S."/>
            <person name="Barrell B.G."/>
        </authorList>
    </citation>
    <scope>NUCLEOTIDE SEQUENCE [LARGE SCALE GENOMIC DNA]</scope>
    <source>
        <strain>ATCC 25618 / H37Rv</strain>
    </source>
</reference>
<reference key="2">
    <citation type="journal article" date="2011" name="Mol. Cell. Proteomics">
        <title>Proteogenomic analysis of Mycobacterium tuberculosis by high resolution mass spectrometry.</title>
        <authorList>
            <person name="Kelkar D.S."/>
            <person name="Kumar D."/>
            <person name="Kumar P."/>
            <person name="Balakrishnan L."/>
            <person name="Muthusamy B."/>
            <person name="Yadav A.K."/>
            <person name="Shrivastava P."/>
            <person name="Marimuthu A."/>
            <person name="Anand S."/>
            <person name="Sundaram H."/>
            <person name="Kingsbury R."/>
            <person name="Harsha H.C."/>
            <person name="Nair B."/>
            <person name="Prasad T.S."/>
            <person name="Chauhan D.S."/>
            <person name="Katoch K."/>
            <person name="Katoch V.M."/>
            <person name="Kumar P."/>
            <person name="Chaerkady R."/>
            <person name="Ramachandran S."/>
            <person name="Dash D."/>
            <person name="Pandey A."/>
        </authorList>
    </citation>
    <scope>IDENTIFICATION BY MASS SPECTROMETRY [LARGE SCALE ANALYSIS]</scope>
    <source>
        <strain>ATCC 25618 / H37Rv</strain>
    </source>
</reference>
<name>HEM3_MYCTU</name>
<protein>
    <recommendedName>
        <fullName>Porphobilinogen deaminase</fullName>
        <shortName>PBG</shortName>
        <ecNumber>2.5.1.61</ecNumber>
    </recommendedName>
    <alternativeName>
        <fullName>Hydroxymethylbilane synthase</fullName>
        <shortName>HMBS</shortName>
    </alternativeName>
    <alternativeName>
        <fullName>Pre-uroporphyrinogen synthase</fullName>
    </alternativeName>
</protein>
<keyword id="KW-0627">Porphyrin biosynthesis</keyword>
<keyword id="KW-1185">Reference proteome</keyword>
<keyword id="KW-0808">Transferase</keyword>